<comment type="function">
    <text evidence="2">Catalytic component of the signal peptidase complex (SPC) which catalyzes the cleavage of N-terminal signal sequences from nascent proteins as they are translocated into the lumen of the endoplasmic reticulum. Specifically cleaves N-terminal signal peptides that contain a hydrophobic alpha-helix (h-region) shorter than 18-20 amino acids.</text>
</comment>
<comment type="catalytic activity">
    <reaction evidence="2">
        <text>Cleavage of hydrophobic, N-terminal signal or leader sequences from secreted and periplasmic proteins.</text>
        <dbReference type="EC" id="3.4.21.89"/>
    </reaction>
</comment>
<comment type="subunit">
    <text evidence="2">Component of the signal peptidase complex paralog C (SPC-C) composed of a catalytic subunit SEC11C and three accessory subunits SPCS1, SPCS2 and SPCS3. Within the complex, interacts with SPCS2 and SPCS3. The complex induces a local thinning of the ER membrane which is used to measure the length of the signal peptide (SP) h-region of protein substrates. This ensures the selectivity of the complex towards h-regions shorter than 18-20 amino acids.</text>
</comment>
<comment type="subcellular location">
    <subcellularLocation>
        <location evidence="1">Endoplasmic reticulum membrane</location>
        <topology evidence="1">Single-pass type II membrane protein</topology>
    </subcellularLocation>
</comment>
<comment type="domain">
    <text evidence="2">The C-terminal short (CTS) helix is essential for catalytic activity. It may be accommodated as a transmembrane helix in the thinned membrane environment of the complex, similarly to the signal peptide in the complex substrates.</text>
</comment>
<comment type="PTM">
    <text evidence="2">May undergo processing at the N-terminus.</text>
</comment>
<comment type="similarity">
    <text evidence="4">Belongs to the peptidase S26B family.</text>
</comment>
<name>SC11C_PONAB</name>
<gene>
    <name type="primary">SEC11C</name>
    <name type="synonym">SEC11L3</name>
</gene>
<reference key="1">
    <citation type="submission" date="2004-11" db="EMBL/GenBank/DDBJ databases">
        <authorList>
            <consortium name="The German cDNA consortium"/>
        </authorList>
    </citation>
    <scope>NUCLEOTIDE SEQUENCE [LARGE SCALE MRNA]</scope>
    <source>
        <tissue>Kidney</tissue>
    </source>
</reference>
<dbReference type="EC" id="3.4.21.89" evidence="2"/>
<dbReference type="EMBL" id="CR858452">
    <property type="protein sequence ID" value="CAH90680.1"/>
    <property type="molecule type" value="mRNA"/>
</dbReference>
<dbReference type="RefSeq" id="NP_001127320.1">
    <property type="nucleotide sequence ID" value="NM_001133848.2"/>
</dbReference>
<dbReference type="SMR" id="Q5RC30"/>
<dbReference type="FunCoup" id="Q5RC30">
    <property type="interactions" value="594"/>
</dbReference>
<dbReference type="STRING" id="9601.ENSPPYP00000010320"/>
<dbReference type="MEROPS" id="S26.010"/>
<dbReference type="Ensembl" id="ENSPPYT00000010728.3">
    <property type="protein sequence ID" value="ENSPPYP00000010320.2"/>
    <property type="gene ID" value="ENSPPYG00000009189.3"/>
</dbReference>
<dbReference type="GeneID" id="100174381"/>
<dbReference type="KEGG" id="pon:100174381"/>
<dbReference type="CTD" id="90701"/>
<dbReference type="eggNOG" id="KOG3342">
    <property type="taxonomic scope" value="Eukaryota"/>
</dbReference>
<dbReference type="GeneTree" id="ENSGT00390000015600"/>
<dbReference type="HOGENOM" id="CLU_089996_0_0_1"/>
<dbReference type="InParanoid" id="Q5RC30"/>
<dbReference type="OMA" id="GSMEPFM"/>
<dbReference type="OrthoDB" id="10257561at2759"/>
<dbReference type="TreeFam" id="TF313648"/>
<dbReference type="Proteomes" id="UP000001595">
    <property type="component" value="Chromosome 18"/>
</dbReference>
<dbReference type="GO" id="GO:0005787">
    <property type="term" value="C:signal peptidase complex"/>
    <property type="evidence" value="ECO:0000250"/>
    <property type="project" value="UniProtKB"/>
</dbReference>
<dbReference type="GO" id="GO:0004252">
    <property type="term" value="F:serine-type endopeptidase activity"/>
    <property type="evidence" value="ECO:0000250"/>
    <property type="project" value="UniProtKB"/>
</dbReference>
<dbReference type="GO" id="GO:0006465">
    <property type="term" value="P:signal peptide processing"/>
    <property type="evidence" value="ECO:0000250"/>
    <property type="project" value="UniProtKB"/>
</dbReference>
<dbReference type="CDD" id="cd06530">
    <property type="entry name" value="S26_SPase_I"/>
    <property type="match status" value="1"/>
</dbReference>
<dbReference type="FunFam" id="2.10.109.10:FF:000003">
    <property type="entry name" value="Signal peptidase complex catalytic subunit SEC11"/>
    <property type="match status" value="1"/>
</dbReference>
<dbReference type="Gene3D" id="2.10.109.10">
    <property type="entry name" value="Umud Fragment, subunit A"/>
    <property type="match status" value="1"/>
</dbReference>
<dbReference type="InterPro" id="IPR036286">
    <property type="entry name" value="LexA/Signal_pep-like_sf"/>
</dbReference>
<dbReference type="InterPro" id="IPR019758">
    <property type="entry name" value="Pept_S26A_signal_pept_1_CS"/>
</dbReference>
<dbReference type="InterPro" id="IPR019756">
    <property type="entry name" value="Pept_S26A_signal_pept_1_Ser-AS"/>
</dbReference>
<dbReference type="InterPro" id="IPR015927">
    <property type="entry name" value="Peptidase_S24_S26A/B/C"/>
</dbReference>
<dbReference type="InterPro" id="IPR019533">
    <property type="entry name" value="Peptidase_S26"/>
</dbReference>
<dbReference type="InterPro" id="IPR001733">
    <property type="entry name" value="Peptidase_S26B"/>
</dbReference>
<dbReference type="NCBIfam" id="TIGR02228">
    <property type="entry name" value="sigpep_I_arch"/>
    <property type="match status" value="1"/>
</dbReference>
<dbReference type="PANTHER" id="PTHR10806">
    <property type="entry name" value="SIGNAL PEPTIDASE COMPLEX CATALYTIC SUBUNIT SEC11"/>
    <property type="match status" value="1"/>
</dbReference>
<dbReference type="PANTHER" id="PTHR10806:SF12">
    <property type="entry name" value="SIGNAL PEPTIDASE COMPLEX CATALYTIC SUBUNIT SEC11C"/>
    <property type="match status" value="1"/>
</dbReference>
<dbReference type="Pfam" id="PF00717">
    <property type="entry name" value="Peptidase_S24"/>
    <property type="match status" value="1"/>
</dbReference>
<dbReference type="PRINTS" id="PR00728">
    <property type="entry name" value="SIGNALPTASE"/>
</dbReference>
<dbReference type="SUPFAM" id="SSF51306">
    <property type="entry name" value="LexA/Signal peptidase"/>
    <property type="match status" value="1"/>
</dbReference>
<dbReference type="PROSITE" id="PS00501">
    <property type="entry name" value="SPASE_I_1"/>
    <property type="match status" value="1"/>
</dbReference>
<dbReference type="PROSITE" id="PS00761">
    <property type="entry name" value="SPASE_I_3"/>
    <property type="match status" value="1"/>
</dbReference>
<protein>
    <recommendedName>
        <fullName>Signal peptidase complex catalytic subunit SEC11C</fullName>
        <ecNumber evidence="2">3.4.21.89</ecNumber>
    </recommendedName>
    <alternativeName>
        <fullName>Microsomal signal peptidase 21 kDa subunit</fullName>
        <shortName>SPase 21 kDa subunit</shortName>
    </alternativeName>
    <alternativeName>
        <fullName>SEC11 homolog C</fullName>
    </alternativeName>
    <alternativeName>
        <fullName>SEC11-like protein 3</fullName>
    </alternativeName>
    <alternativeName>
        <fullName>SPC21</fullName>
    </alternativeName>
</protein>
<organism>
    <name type="scientific">Pongo abelii</name>
    <name type="common">Sumatran orangutan</name>
    <name type="synonym">Pongo pygmaeus abelii</name>
    <dbReference type="NCBI Taxonomy" id="9601"/>
    <lineage>
        <taxon>Eukaryota</taxon>
        <taxon>Metazoa</taxon>
        <taxon>Chordata</taxon>
        <taxon>Craniata</taxon>
        <taxon>Vertebrata</taxon>
        <taxon>Euteleostomi</taxon>
        <taxon>Mammalia</taxon>
        <taxon>Eutheria</taxon>
        <taxon>Euarchontoglires</taxon>
        <taxon>Primates</taxon>
        <taxon>Haplorrhini</taxon>
        <taxon>Catarrhini</taxon>
        <taxon>Hominidae</taxon>
        <taxon>Pongo</taxon>
    </lineage>
</organism>
<accession>Q5RC30</accession>
<keyword id="KW-0256">Endoplasmic reticulum</keyword>
<keyword id="KW-0378">Hydrolase</keyword>
<keyword id="KW-0472">Membrane</keyword>
<keyword id="KW-0645">Protease</keyword>
<keyword id="KW-1185">Reference proteome</keyword>
<keyword id="KW-0735">Signal-anchor</keyword>
<keyword id="KW-0812">Transmembrane</keyword>
<keyword id="KW-1133">Transmembrane helix</keyword>
<sequence length="192" mass="21542">MVRAGAVGAHLPASGLDIFGDLKKMNKRQLYYQVLNFAMIVSSALMIWKGLIVLTGSESPIVVVLSGSMEPAFHRGDLLFLTNFREDPIRAGEIVVFKVEGRDIPIVHRVIKVHEKDNGDIKFLTKGDNNEVDDRGLYKEGQNWLEKKDVVGRARGFLPYVGMVTIIMNDYPKFKYALLAVMGAYVLLKRES</sequence>
<feature type="chain" id="PRO_0000109550" description="Signal peptidase complex catalytic subunit SEC11C">
    <location>
        <begin position="1"/>
        <end position="192"/>
    </location>
</feature>
<feature type="topological domain" description="Cytoplasmic" evidence="1">
    <location>
        <begin position="1"/>
        <end position="28"/>
    </location>
</feature>
<feature type="transmembrane region" description="Helical; Signal-anchor for type II membrane protein" evidence="3">
    <location>
        <begin position="29"/>
        <end position="48"/>
    </location>
</feature>
<feature type="topological domain" description="Lumenal" evidence="1">
    <location>
        <begin position="49"/>
        <end position="192"/>
    </location>
</feature>
<feature type="region of interest" description="C-terminal short (CTS) helix" evidence="2">
    <location>
        <begin position="177"/>
        <end position="188"/>
    </location>
</feature>
<feature type="active site" description="Charge relay system" evidence="2">
    <location>
        <position position="68"/>
    </location>
</feature>
<feature type="active site" description="Charge relay system" evidence="2">
    <location>
        <position position="108"/>
    </location>
</feature>
<feature type="active site" description="Charge relay system" evidence="2">
    <location>
        <position position="134"/>
    </location>
</feature>
<proteinExistence type="evidence at transcript level"/>
<evidence type="ECO:0000250" key="1">
    <source>
        <dbReference type="UniProtKB" id="P13679"/>
    </source>
</evidence>
<evidence type="ECO:0000250" key="2">
    <source>
        <dbReference type="UniProtKB" id="Q9BY50"/>
    </source>
</evidence>
<evidence type="ECO:0000255" key="3"/>
<evidence type="ECO:0000305" key="4"/>